<keyword id="KW-0067">ATP-binding</keyword>
<keyword id="KW-0963">Cytoplasm</keyword>
<keyword id="KW-0418">Kinase</keyword>
<keyword id="KW-0479">Metal-binding</keyword>
<keyword id="KW-0545">Nucleotide biosynthesis</keyword>
<keyword id="KW-0547">Nucleotide-binding</keyword>
<keyword id="KW-1185">Reference proteome</keyword>
<keyword id="KW-0808">Transferase</keyword>
<keyword id="KW-0862">Zinc</keyword>
<accession>B0KCM0</accession>
<proteinExistence type="inferred from homology"/>
<dbReference type="EC" id="2.7.4.3" evidence="1"/>
<dbReference type="EMBL" id="CP000924">
    <property type="protein sequence ID" value="ABY94063.1"/>
    <property type="molecule type" value="Genomic_DNA"/>
</dbReference>
<dbReference type="RefSeq" id="WP_003868580.1">
    <property type="nucleotide sequence ID" value="NC_010321.1"/>
</dbReference>
<dbReference type="SMR" id="B0KCM0"/>
<dbReference type="STRING" id="340099.Teth39_0394"/>
<dbReference type="KEGG" id="tpd:Teth39_0394"/>
<dbReference type="eggNOG" id="COG0563">
    <property type="taxonomic scope" value="Bacteria"/>
</dbReference>
<dbReference type="HOGENOM" id="CLU_032354_1_2_9"/>
<dbReference type="UniPathway" id="UPA00588">
    <property type="reaction ID" value="UER00649"/>
</dbReference>
<dbReference type="Proteomes" id="UP000002156">
    <property type="component" value="Chromosome"/>
</dbReference>
<dbReference type="GO" id="GO:0005737">
    <property type="term" value="C:cytoplasm"/>
    <property type="evidence" value="ECO:0007669"/>
    <property type="project" value="UniProtKB-SubCell"/>
</dbReference>
<dbReference type="GO" id="GO:0004017">
    <property type="term" value="F:adenylate kinase activity"/>
    <property type="evidence" value="ECO:0007669"/>
    <property type="project" value="UniProtKB-UniRule"/>
</dbReference>
<dbReference type="GO" id="GO:0005524">
    <property type="term" value="F:ATP binding"/>
    <property type="evidence" value="ECO:0007669"/>
    <property type="project" value="UniProtKB-UniRule"/>
</dbReference>
<dbReference type="GO" id="GO:0008270">
    <property type="term" value="F:zinc ion binding"/>
    <property type="evidence" value="ECO:0007669"/>
    <property type="project" value="UniProtKB-UniRule"/>
</dbReference>
<dbReference type="GO" id="GO:0044209">
    <property type="term" value="P:AMP salvage"/>
    <property type="evidence" value="ECO:0007669"/>
    <property type="project" value="UniProtKB-UniRule"/>
</dbReference>
<dbReference type="CDD" id="cd01428">
    <property type="entry name" value="ADK"/>
    <property type="match status" value="1"/>
</dbReference>
<dbReference type="FunFam" id="3.40.50.300:FF:000106">
    <property type="entry name" value="Adenylate kinase mitochondrial"/>
    <property type="match status" value="1"/>
</dbReference>
<dbReference type="Gene3D" id="3.40.50.300">
    <property type="entry name" value="P-loop containing nucleotide triphosphate hydrolases"/>
    <property type="match status" value="1"/>
</dbReference>
<dbReference type="HAMAP" id="MF_00235">
    <property type="entry name" value="Adenylate_kinase_Adk"/>
    <property type="match status" value="1"/>
</dbReference>
<dbReference type="InterPro" id="IPR006259">
    <property type="entry name" value="Adenyl_kin_sub"/>
</dbReference>
<dbReference type="InterPro" id="IPR000850">
    <property type="entry name" value="Adenylat/UMP-CMP_kin"/>
</dbReference>
<dbReference type="InterPro" id="IPR033690">
    <property type="entry name" value="Adenylat_kinase_CS"/>
</dbReference>
<dbReference type="InterPro" id="IPR007862">
    <property type="entry name" value="Adenylate_kinase_lid-dom"/>
</dbReference>
<dbReference type="InterPro" id="IPR027417">
    <property type="entry name" value="P-loop_NTPase"/>
</dbReference>
<dbReference type="NCBIfam" id="TIGR01351">
    <property type="entry name" value="adk"/>
    <property type="match status" value="1"/>
</dbReference>
<dbReference type="NCBIfam" id="NF001380">
    <property type="entry name" value="PRK00279.1-2"/>
    <property type="match status" value="1"/>
</dbReference>
<dbReference type="NCBIfam" id="NF001381">
    <property type="entry name" value="PRK00279.1-3"/>
    <property type="match status" value="1"/>
</dbReference>
<dbReference type="NCBIfam" id="NF011100">
    <property type="entry name" value="PRK14527.1"/>
    <property type="match status" value="1"/>
</dbReference>
<dbReference type="PANTHER" id="PTHR23359">
    <property type="entry name" value="NUCLEOTIDE KINASE"/>
    <property type="match status" value="1"/>
</dbReference>
<dbReference type="Pfam" id="PF00406">
    <property type="entry name" value="ADK"/>
    <property type="match status" value="1"/>
</dbReference>
<dbReference type="Pfam" id="PF05191">
    <property type="entry name" value="ADK_lid"/>
    <property type="match status" value="1"/>
</dbReference>
<dbReference type="PRINTS" id="PR00094">
    <property type="entry name" value="ADENYLTKNASE"/>
</dbReference>
<dbReference type="SUPFAM" id="SSF52540">
    <property type="entry name" value="P-loop containing nucleoside triphosphate hydrolases"/>
    <property type="match status" value="1"/>
</dbReference>
<dbReference type="PROSITE" id="PS00113">
    <property type="entry name" value="ADENYLATE_KINASE"/>
    <property type="match status" value="1"/>
</dbReference>
<reference key="1">
    <citation type="submission" date="2008-01" db="EMBL/GenBank/DDBJ databases">
        <title>Complete sequence of Thermoanaerobacter pseudethanolicus 39E.</title>
        <authorList>
            <person name="Copeland A."/>
            <person name="Lucas S."/>
            <person name="Lapidus A."/>
            <person name="Barry K."/>
            <person name="Glavina del Rio T."/>
            <person name="Dalin E."/>
            <person name="Tice H."/>
            <person name="Pitluck S."/>
            <person name="Bruce D."/>
            <person name="Goodwin L."/>
            <person name="Saunders E."/>
            <person name="Brettin T."/>
            <person name="Detter J.C."/>
            <person name="Han C."/>
            <person name="Schmutz J."/>
            <person name="Larimer F."/>
            <person name="Land M."/>
            <person name="Hauser L."/>
            <person name="Kyrpides N."/>
            <person name="Lykidis A."/>
            <person name="Hemme C."/>
            <person name="Fields M.W."/>
            <person name="He Z."/>
            <person name="Zhou J."/>
            <person name="Richardson P."/>
        </authorList>
    </citation>
    <scope>NUCLEOTIDE SEQUENCE [LARGE SCALE GENOMIC DNA]</scope>
    <source>
        <strain>ATCC 33223 / DSM 2355 / 39E</strain>
    </source>
</reference>
<evidence type="ECO:0000255" key="1">
    <source>
        <dbReference type="HAMAP-Rule" id="MF_00235"/>
    </source>
</evidence>
<sequence length="217" mass="24396">MRVILLGPPGAGKGTQAVKIAKEFDIPHISTGDIFRQNLRDNTDLGKLAKEYMDKGLLVPDEVTNKIVEDRLEKDDCQKGFLLDGYPRNVAQAEELDRFLHDKGIHLDCVLNIEVDREALIERITGRRVCPNCGATYHIKTSPPAVDNVCDKCGAQLIQRSDDKLESVVKRLEVYESQTKPLIEYYTKKNTLVNIDGNKSVEEVFEDIKKALGDRGK</sequence>
<protein>
    <recommendedName>
        <fullName evidence="1">Adenylate kinase</fullName>
        <shortName evidence="1">AK</shortName>
        <ecNumber evidence="1">2.7.4.3</ecNumber>
    </recommendedName>
    <alternativeName>
        <fullName evidence="1">ATP-AMP transphosphorylase</fullName>
    </alternativeName>
    <alternativeName>
        <fullName evidence="1">ATP:AMP phosphotransferase</fullName>
    </alternativeName>
    <alternativeName>
        <fullName evidence="1">Adenylate monophosphate kinase</fullName>
    </alternativeName>
</protein>
<organism>
    <name type="scientific">Thermoanaerobacter pseudethanolicus (strain ATCC 33223 / 39E)</name>
    <name type="common">Clostridium thermohydrosulfuricum</name>
    <dbReference type="NCBI Taxonomy" id="340099"/>
    <lineage>
        <taxon>Bacteria</taxon>
        <taxon>Bacillati</taxon>
        <taxon>Bacillota</taxon>
        <taxon>Clostridia</taxon>
        <taxon>Thermoanaerobacterales</taxon>
        <taxon>Thermoanaerobacteraceae</taxon>
        <taxon>Thermoanaerobacter</taxon>
    </lineage>
</organism>
<name>KAD_THEP3</name>
<feature type="chain" id="PRO_1000100618" description="Adenylate kinase">
    <location>
        <begin position="1"/>
        <end position="217"/>
    </location>
</feature>
<feature type="region of interest" description="NMP" evidence="1">
    <location>
        <begin position="30"/>
        <end position="59"/>
    </location>
</feature>
<feature type="region of interest" description="LID" evidence="1">
    <location>
        <begin position="126"/>
        <end position="163"/>
    </location>
</feature>
<feature type="binding site" evidence="1">
    <location>
        <begin position="10"/>
        <end position="15"/>
    </location>
    <ligand>
        <name>ATP</name>
        <dbReference type="ChEBI" id="CHEBI:30616"/>
    </ligand>
</feature>
<feature type="binding site" evidence="1">
    <location>
        <position position="31"/>
    </location>
    <ligand>
        <name>AMP</name>
        <dbReference type="ChEBI" id="CHEBI:456215"/>
    </ligand>
</feature>
<feature type="binding site" evidence="1">
    <location>
        <position position="36"/>
    </location>
    <ligand>
        <name>AMP</name>
        <dbReference type="ChEBI" id="CHEBI:456215"/>
    </ligand>
</feature>
<feature type="binding site" evidence="1">
    <location>
        <begin position="57"/>
        <end position="59"/>
    </location>
    <ligand>
        <name>AMP</name>
        <dbReference type="ChEBI" id="CHEBI:456215"/>
    </ligand>
</feature>
<feature type="binding site" evidence="1">
    <location>
        <begin position="85"/>
        <end position="88"/>
    </location>
    <ligand>
        <name>AMP</name>
        <dbReference type="ChEBI" id="CHEBI:456215"/>
    </ligand>
</feature>
<feature type="binding site" evidence="1">
    <location>
        <position position="92"/>
    </location>
    <ligand>
        <name>AMP</name>
        <dbReference type="ChEBI" id="CHEBI:456215"/>
    </ligand>
</feature>
<feature type="binding site" evidence="1">
    <location>
        <position position="127"/>
    </location>
    <ligand>
        <name>ATP</name>
        <dbReference type="ChEBI" id="CHEBI:30616"/>
    </ligand>
</feature>
<feature type="binding site" evidence="1">
    <location>
        <position position="130"/>
    </location>
    <ligand>
        <name>Zn(2+)</name>
        <dbReference type="ChEBI" id="CHEBI:29105"/>
        <note>structural</note>
    </ligand>
</feature>
<feature type="binding site" evidence="1">
    <location>
        <position position="133"/>
    </location>
    <ligand>
        <name>Zn(2+)</name>
        <dbReference type="ChEBI" id="CHEBI:29105"/>
        <note>structural</note>
    </ligand>
</feature>
<feature type="binding site" evidence="1">
    <location>
        <begin position="136"/>
        <end position="137"/>
    </location>
    <ligand>
        <name>ATP</name>
        <dbReference type="ChEBI" id="CHEBI:30616"/>
    </ligand>
</feature>
<feature type="binding site" evidence="1">
    <location>
        <position position="150"/>
    </location>
    <ligand>
        <name>Zn(2+)</name>
        <dbReference type="ChEBI" id="CHEBI:29105"/>
        <note>structural</note>
    </ligand>
</feature>
<feature type="binding site" evidence="1">
    <location>
        <position position="153"/>
    </location>
    <ligand>
        <name>Zn(2+)</name>
        <dbReference type="ChEBI" id="CHEBI:29105"/>
        <note>structural</note>
    </ligand>
</feature>
<feature type="binding site" evidence="1">
    <location>
        <position position="160"/>
    </location>
    <ligand>
        <name>AMP</name>
        <dbReference type="ChEBI" id="CHEBI:456215"/>
    </ligand>
</feature>
<feature type="binding site" evidence="1">
    <location>
        <position position="171"/>
    </location>
    <ligand>
        <name>AMP</name>
        <dbReference type="ChEBI" id="CHEBI:456215"/>
    </ligand>
</feature>
<feature type="binding site" evidence="1">
    <location>
        <position position="199"/>
    </location>
    <ligand>
        <name>ATP</name>
        <dbReference type="ChEBI" id="CHEBI:30616"/>
    </ligand>
</feature>
<gene>
    <name evidence="1" type="primary">adk</name>
    <name type="ordered locus">Teth39_0394</name>
</gene>
<comment type="function">
    <text evidence="1">Catalyzes the reversible transfer of the terminal phosphate group between ATP and AMP. Plays an important role in cellular energy homeostasis and in adenine nucleotide metabolism.</text>
</comment>
<comment type="catalytic activity">
    <reaction evidence="1">
        <text>AMP + ATP = 2 ADP</text>
        <dbReference type="Rhea" id="RHEA:12973"/>
        <dbReference type="ChEBI" id="CHEBI:30616"/>
        <dbReference type="ChEBI" id="CHEBI:456215"/>
        <dbReference type="ChEBI" id="CHEBI:456216"/>
        <dbReference type="EC" id="2.7.4.3"/>
    </reaction>
</comment>
<comment type="pathway">
    <text evidence="1">Purine metabolism; AMP biosynthesis via salvage pathway; AMP from ADP: step 1/1.</text>
</comment>
<comment type="subunit">
    <text evidence="1">Monomer.</text>
</comment>
<comment type="subcellular location">
    <subcellularLocation>
        <location evidence="1">Cytoplasm</location>
    </subcellularLocation>
</comment>
<comment type="domain">
    <text evidence="1">Consists of three domains, a large central CORE domain and two small peripheral domains, NMPbind and LID, which undergo movements during catalysis. The LID domain closes over the site of phosphoryl transfer upon ATP binding. Assembling and dissambling the active center during each catalytic cycle provides an effective means to prevent ATP hydrolysis. Some bacteria have evolved a zinc-coordinating structure that stabilizes the LID domain.</text>
</comment>
<comment type="similarity">
    <text evidence="1">Belongs to the adenylate kinase family.</text>
</comment>